<organism>
    <name type="scientific">Salmonella enteritidis PT4 (strain P125109)</name>
    <dbReference type="NCBI Taxonomy" id="550537"/>
    <lineage>
        <taxon>Bacteria</taxon>
        <taxon>Pseudomonadati</taxon>
        <taxon>Pseudomonadota</taxon>
        <taxon>Gammaproteobacteria</taxon>
        <taxon>Enterobacterales</taxon>
        <taxon>Enterobacteriaceae</taxon>
        <taxon>Salmonella</taxon>
    </lineage>
</organism>
<proteinExistence type="inferred from homology"/>
<protein>
    <recommendedName>
        <fullName evidence="1">CTP synthase</fullName>
        <ecNumber evidence="1">6.3.4.2</ecNumber>
    </recommendedName>
    <alternativeName>
        <fullName evidence="1">Cytidine 5'-triphosphate synthase</fullName>
    </alternativeName>
    <alternativeName>
        <fullName evidence="1">Cytidine triphosphate synthetase</fullName>
        <shortName evidence="1">CTP synthetase</shortName>
        <shortName evidence="1">CTPS</shortName>
    </alternativeName>
    <alternativeName>
        <fullName evidence="1">UTP--ammonia ligase</fullName>
    </alternativeName>
</protein>
<keyword id="KW-0067">ATP-binding</keyword>
<keyword id="KW-0315">Glutamine amidotransferase</keyword>
<keyword id="KW-0436">Ligase</keyword>
<keyword id="KW-0460">Magnesium</keyword>
<keyword id="KW-0479">Metal-binding</keyword>
<keyword id="KW-0547">Nucleotide-binding</keyword>
<keyword id="KW-0665">Pyrimidine biosynthesis</keyword>
<evidence type="ECO:0000255" key="1">
    <source>
        <dbReference type="HAMAP-Rule" id="MF_01227"/>
    </source>
</evidence>
<comment type="function">
    <text evidence="1">Catalyzes the ATP-dependent amination of UTP to CTP with either L-glutamine or ammonia as the source of nitrogen. Regulates intracellular CTP levels through interactions with the four ribonucleotide triphosphates.</text>
</comment>
<comment type="catalytic activity">
    <reaction evidence="1">
        <text>UTP + L-glutamine + ATP + H2O = CTP + L-glutamate + ADP + phosphate + 2 H(+)</text>
        <dbReference type="Rhea" id="RHEA:26426"/>
        <dbReference type="ChEBI" id="CHEBI:15377"/>
        <dbReference type="ChEBI" id="CHEBI:15378"/>
        <dbReference type="ChEBI" id="CHEBI:29985"/>
        <dbReference type="ChEBI" id="CHEBI:30616"/>
        <dbReference type="ChEBI" id="CHEBI:37563"/>
        <dbReference type="ChEBI" id="CHEBI:43474"/>
        <dbReference type="ChEBI" id="CHEBI:46398"/>
        <dbReference type="ChEBI" id="CHEBI:58359"/>
        <dbReference type="ChEBI" id="CHEBI:456216"/>
        <dbReference type="EC" id="6.3.4.2"/>
    </reaction>
</comment>
<comment type="catalytic activity">
    <reaction evidence="1">
        <text>L-glutamine + H2O = L-glutamate + NH4(+)</text>
        <dbReference type="Rhea" id="RHEA:15889"/>
        <dbReference type="ChEBI" id="CHEBI:15377"/>
        <dbReference type="ChEBI" id="CHEBI:28938"/>
        <dbReference type="ChEBI" id="CHEBI:29985"/>
        <dbReference type="ChEBI" id="CHEBI:58359"/>
    </reaction>
</comment>
<comment type="catalytic activity">
    <reaction evidence="1">
        <text>UTP + NH4(+) + ATP = CTP + ADP + phosphate + 2 H(+)</text>
        <dbReference type="Rhea" id="RHEA:16597"/>
        <dbReference type="ChEBI" id="CHEBI:15378"/>
        <dbReference type="ChEBI" id="CHEBI:28938"/>
        <dbReference type="ChEBI" id="CHEBI:30616"/>
        <dbReference type="ChEBI" id="CHEBI:37563"/>
        <dbReference type="ChEBI" id="CHEBI:43474"/>
        <dbReference type="ChEBI" id="CHEBI:46398"/>
        <dbReference type="ChEBI" id="CHEBI:456216"/>
    </reaction>
</comment>
<comment type="activity regulation">
    <text evidence="1">Allosterically activated by GTP, when glutamine is the substrate; GTP has no effect on the reaction when ammonia is the substrate. The allosteric effector GTP functions by stabilizing the protein conformation that binds the tetrahedral intermediate(s) formed during glutamine hydrolysis. Inhibited by the product CTP, via allosteric rather than competitive inhibition.</text>
</comment>
<comment type="pathway">
    <text evidence="1">Pyrimidine metabolism; CTP biosynthesis via de novo pathway; CTP from UDP: step 2/2.</text>
</comment>
<comment type="subunit">
    <text evidence="1">Homotetramer.</text>
</comment>
<comment type="miscellaneous">
    <text evidence="1">CTPSs have evolved a hybrid strategy for distinguishing between UTP and CTP. The overlapping regions of the product feedback inhibitory and substrate sites recognize a common feature in both compounds, the triphosphate moiety. To differentiate isosteric substrate and product pyrimidine rings, an additional pocket far from the expected kinase/ligase catalytic site, specifically recognizes the cytosine and ribose portions of the product inhibitor.</text>
</comment>
<comment type="similarity">
    <text evidence="1">Belongs to the CTP synthase family.</text>
</comment>
<gene>
    <name evidence="1" type="primary">pyrG</name>
    <name type="ordered locus">SEN2792</name>
</gene>
<reference key="1">
    <citation type="journal article" date="2008" name="Genome Res.">
        <title>Comparative genome analysis of Salmonella enteritidis PT4 and Salmonella gallinarum 287/91 provides insights into evolutionary and host adaptation pathways.</title>
        <authorList>
            <person name="Thomson N.R."/>
            <person name="Clayton D.J."/>
            <person name="Windhorst D."/>
            <person name="Vernikos G."/>
            <person name="Davidson S."/>
            <person name="Churcher C."/>
            <person name="Quail M.A."/>
            <person name="Stevens M."/>
            <person name="Jones M.A."/>
            <person name="Watson M."/>
            <person name="Barron A."/>
            <person name="Layton A."/>
            <person name="Pickard D."/>
            <person name="Kingsley R.A."/>
            <person name="Bignell A."/>
            <person name="Clark L."/>
            <person name="Harris B."/>
            <person name="Ormond D."/>
            <person name="Abdellah Z."/>
            <person name="Brooks K."/>
            <person name="Cherevach I."/>
            <person name="Chillingworth T."/>
            <person name="Woodward J."/>
            <person name="Norberczak H."/>
            <person name="Lord A."/>
            <person name="Arrowsmith C."/>
            <person name="Jagels K."/>
            <person name="Moule S."/>
            <person name="Mungall K."/>
            <person name="Saunders M."/>
            <person name="Whitehead S."/>
            <person name="Chabalgoity J.A."/>
            <person name="Maskell D."/>
            <person name="Humphreys T."/>
            <person name="Roberts M."/>
            <person name="Barrow P.A."/>
            <person name="Dougan G."/>
            <person name="Parkhill J."/>
        </authorList>
    </citation>
    <scope>NUCLEOTIDE SEQUENCE [LARGE SCALE GENOMIC DNA]</scope>
    <source>
        <strain>P125109</strain>
    </source>
</reference>
<sequence>MTTNYIFVTGGVVSSLGKGIAAASLAAILEARGLNVTIMKLDPYINVDPGTMSPIQHGEVFVTEDGAETDLDLGHYERFIRTKMSRRNNFTTGRIYSDVLRKERRGDYLGATVQVIPHITNAIKERVLEGGEGHDVVLVEIGGTVGDIESLPFLEAIRQLAVDIGREHALFMHLTLVPYLAAAGEVKTKPTQHSVKELLSIGIQPDILICRSDRAVPANERAKIALFCNVPEKAVISMKDVDSIYKIPGLLKSQGLDDYICKRFSLNCPEANLSEWEQVIYEEANPAGEVTIGMVGKYIELPDAYKSVIEALKHGGLKNRVTVNIKLIDSQDVETRGVEILKDLDAILIPGGFGYRGVEGKIATARYARENNIPYLGICLGMQVALIEFARNVAGMDNANSTEFVPDCKYPVVALITEWRDEDGNVEVRSEKSDLGGTMRLGAQQCQLSDDSLVRQLYGASTIVERHRHRYEVNNMLLKQIEAAGLRVAGRSGDDQLVEIIEVPNHPWFVACQFHPEFTSTPRDGHPLFAGFVKAANEHQKRQAK</sequence>
<feature type="chain" id="PRO_1000139559" description="CTP synthase">
    <location>
        <begin position="1"/>
        <end position="545"/>
    </location>
</feature>
<feature type="domain" description="Glutamine amidotransferase type-1" evidence="1">
    <location>
        <begin position="291"/>
        <end position="542"/>
    </location>
</feature>
<feature type="region of interest" description="Amidoligase domain" evidence="1">
    <location>
        <begin position="1"/>
        <end position="266"/>
    </location>
</feature>
<feature type="active site" description="Nucleophile; for glutamine hydrolysis" evidence="1">
    <location>
        <position position="379"/>
    </location>
</feature>
<feature type="active site" evidence="1">
    <location>
        <position position="515"/>
    </location>
</feature>
<feature type="active site" evidence="1">
    <location>
        <position position="517"/>
    </location>
</feature>
<feature type="binding site" evidence="1">
    <location>
        <position position="14"/>
    </location>
    <ligand>
        <name>CTP</name>
        <dbReference type="ChEBI" id="CHEBI:37563"/>
        <note>allosteric inhibitor</note>
    </ligand>
</feature>
<feature type="binding site" evidence="1">
    <location>
        <position position="14"/>
    </location>
    <ligand>
        <name>UTP</name>
        <dbReference type="ChEBI" id="CHEBI:46398"/>
    </ligand>
</feature>
<feature type="binding site" evidence="1">
    <location>
        <begin position="15"/>
        <end position="20"/>
    </location>
    <ligand>
        <name>ATP</name>
        <dbReference type="ChEBI" id="CHEBI:30616"/>
    </ligand>
</feature>
<feature type="binding site" evidence="1">
    <location>
        <position position="72"/>
    </location>
    <ligand>
        <name>ATP</name>
        <dbReference type="ChEBI" id="CHEBI:30616"/>
    </ligand>
</feature>
<feature type="binding site" evidence="1">
    <location>
        <position position="72"/>
    </location>
    <ligand>
        <name>Mg(2+)</name>
        <dbReference type="ChEBI" id="CHEBI:18420"/>
    </ligand>
</feature>
<feature type="binding site" evidence="1">
    <location>
        <position position="140"/>
    </location>
    <ligand>
        <name>Mg(2+)</name>
        <dbReference type="ChEBI" id="CHEBI:18420"/>
    </ligand>
</feature>
<feature type="binding site" evidence="1">
    <location>
        <begin position="147"/>
        <end position="149"/>
    </location>
    <ligand>
        <name>CTP</name>
        <dbReference type="ChEBI" id="CHEBI:37563"/>
        <note>allosteric inhibitor</note>
    </ligand>
</feature>
<feature type="binding site" evidence="1">
    <location>
        <begin position="187"/>
        <end position="192"/>
    </location>
    <ligand>
        <name>CTP</name>
        <dbReference type="ChEBI" id="CHEBI:37563"/>
        <note>allosteric inhibitor</note>
    </ligand>
</feature>
<feature type="binding site" evidence="1">
    <location>
        <begin position="187"/>
        <end position="192"/>
    </location>
    <ligand>
        <name>UTP</name>
        <dbReference type="ChEBI" id="CHEBI:46398"/>
    </ligand>
</feature>
<feature type="binding site" evidence="1">
    <location>
        <position position="223"/>
    </location>
    <ligand>
        <name>CTP</name>
        <dbReference type="ChEBI" id="CHEBI:37563"/>
        <note>allosteric inhibitor</note>
    </ligand>
</feature>
<feature type="binding site" evidence="1">
    <location>
        <position position="223"/>
    </location>
    <ligand>
        <name>UTP</name>
        <dbReference type="ChEBI" id="CHEBI:46398"/>
    </ligand>
</feature>
<feature type="binding site" evidence="1">
    <location>
        <begin position="239"/>
        <end position="241"/>
    </location>
    <ligand>
        <name>ATP</name>
        <dbReference type="ChEBI" id="CHEBI:30616"/>
    </ligand>
</feature>
<feature type="binding site" evidence="1">
    <location>
        <position position="352"/>
    </location>
    <ligand>
        <name>L-glutamine</name>
        <dbReference type="ChEBI" id="CHEBI:58359"/>
    </ligand>
</feature>
<feature type="binding site" evidence="1">
    <location>
        <begin position="380"/>
        <end position="383"/>
    </location>
    <ligand>
        <name>L-glutamine</name>
        <dbReference type="ChEBI" id="CHEBI:58359"/>
    </ligand>
</feature>
<feature type="binding site" evidence="1">
    <location>
        <position position="403"/>
    </location>
    <ligand>
        <name>L-glutamine</name>
        <dbReference type="ChEBI" id="CHEBI:58359"/>
    </ligand>
</feature>
<feature type="binding site" evidence="1">
    <location>
        <position position="470"/>
    </location>
    <ligand>
        <name>L-glutamine</name>
        <dbReference type="ChEBI" id="CHEBI:58359"/>
    </ligand>
</feature>
<dbReference type="EC" id="6.3.4.2" evidence="1"/>
<dbReference type="EMBL" id="AM933172">
    <property type="protein sequence ID" value="CAR34371.1"/>
    <property type="molecule type" value="Genomic_DNA"/>
</dbReference>
<dbReference type="RefSeq" id="WP_000210863.1">
    <property type="nucleotide sequence ID" value="NC_011294.1"/>
</dbReference>
<dbReference type="SMR" id="B5QW41"/>
<dbReference type="KEGG" id="set:SEN2792"/>
<dbReference type="HOGENOM" id="CLU_011675_5_0_6"/>
<dbReference type="UniPathway" id="UPA00159">
    <property type="reaction ID" value="UER00277"/>
</dbReference>
<dbReference type="Proteomes" id="UP000000613">
    <property type="component" value="Chromosome"/>
</dbReference>
<dbReference type="GO" id="GO:0005829">
    <property type="term" value="C:cytosol"/>
    <property type="evidence" value="ECO:0007669"/>
    <property type="project" value="TreeGrafter"/>
</dbReference>
<dbReference type="GO" id="GO:0005524">
    <property type="term" value="F:ATP binding"/>
    <property type="evidence" value="ECO:0007669"/>
    <property type="project" value="UniProtKB-KW"/>
</dbReference>
<dbReference type="GO" id="GO:0003883">
    <property type="term" value="F:CTP synthase activity"/>
    <property type="evidence" value="ECO:0007669"/>
    <property type="project" value="UniProtKB-UniRule"/>
</dbReference>
<dbReference type="GO" id="GO:0004359">
    <property type="term" value="F:glutaminase activity"/>
    <property type="evidence" value="ECO:0007669"/>
    <property type="project" value="RHEA"/>
</dbReference>
<dbReference type="GO" id="GO:0042802">
    <property type="term" value="F:identical protein binding"/>
    <property type="evidence" value="ECO:0007669"/>
    <property type="project" value="TreeGrafter"/>
</dbReference>
<dbReference type="GO" id="GO:0046872">
    <property type="term" value="F:metal ion binding"/>
    <property type="evidence" value="ECO:0007669"/>
    <property type="project" value="UniProtKB-KW"/>
</dbReference>
<dbReference type="GO" id="GO:0044210">
    <property type="term" value="P:'de novo' CTP biosynthetic process"/>
    <property type="evidence" value="ECO:0007669"/>
    <property type="project" value="UniProtKB-UniRule"/>
</dbReference>
<dbReference type="GO" id="GO:0019856">
    <property type="term" value="P:pyrimidine nucleobase biosynthetic process"/>
    <property type="evidence" value="ECO:0007669"/>
    <property type="project" value="TreeGrafter"/>
</dbReference>
<dbReference type="CDD" id="cd03113">
    <property type="entry name" value="CTPS_N"/>
    <property type="match status" value="1"/>
</dbReference>
<dbReference type="CDD" id="cd01746">
    <property type="entry name" value="GATase1_CTP_Synthase"/>
    <property type="match status" value="1"/>
</dbReference>
<dbReference type="FunFam" id="3.40.50.300:FF:000009">
    <property type="entry name" value="CTP synthase"/>
    <property type="match status" value="1"/>
</dbReference>
<dbReference type="FunFam" id="3.40.50.880:FF:000002">
    <property type="entry name" value="CTP synthase"/>
    <property type="match status" value="1"/>
</dbReference>
<dbReference type="Gene3D" id="3.40.50.880">
    <property type="match status" value="1"/>
</dbReference>
<dbReference type="Gene3D" id="3.40.50.300">
    <property type="entry name" value="P-loop containing nucleotide triphosphate hydrolases"/>
    <property type="match status" value="1"/>
</dbReference>
<dbReference type="HAMAP" id="MF_01227">
    <property type="entry name" value="PyrG"/>
    <property type="match status" value="1"/>
</dbReference>
<dbReference type="InterPro" id="IPR029062">
    <property type="entry name" value="Class_I_gatase-like"/>
</dbReference>
<dbReference type="InterPro" id="IPR004468">
    <property type="entry name" value="CTP_synthase"/>
</dbReference>
<dbReference type="InterPro" id="IPR017456">
    <property type="entry name" value="CTP_synthase_N"/>
</dbReference>
<dbReference type="InterPro" id="IPR017926">
    <property type="entry name" value="GATASE"/>
</dbReference>
<dbReference type="InterPro" id="IPR033828">
    <property type="entry name" value="GATase1_CTP_Synthase"/>
</dbReference>
<dbReference type="InterPro" id="IPR027417">
    <property type="entry name" value="P-loop_NTPase"/>
</dbReference>
<dbReference type="NCBIfam" id="NF003792">
    <property type="entry name" value="PRK05380.1"/>
    <property type="match status" value="1"/>
</dbReference>
<dbReference type="NCBIfam" id="TIGR00337">
    <property type="entry name" value="PyrG"/>
    <property type="match status" value="1"/>
</dbReference>
<dbReference type="PANTHER" id="PTHR11550">
    <property type="entry name" value="CTP SYNTHASE"/>
    <property type="match status" value="1"/>
</dbReference>
<dbReference type="PANTHER" id="PTHR11550:SF0">
    <property type="entry name" value="CTP SYNTHASE-RELATED"/>
    <property type="match status" value="1"/>
</dbReference>
<dbReference type="Pfam" id="PF06418">
    <property type="entry name" value="CTP_synth_N"/>
    <property type="match status" value="1"/>
</dbReference>
<dbReference type="Pfam" id="PF00117">
    <property type="entry name" value="GATase"/>
    <property type="match status" value="1"/>
</dbReference>
<dbReference type="SUPFAM" id="SSF52317">
    <property type="entry name" value="Class I glutamine amidotransferase-like"/>
    <property type="match status" value="1"/>
</dbReference>
<dbReference type="SUPFAM" id="SSF52540">
    <property type="entry name" value="P-loop containing nucleoside triphosphate hydrolases"/>
    <property type="match status" value="1"/>
</dbReference>
<dbReference type="PROSITE" id="PS51273">
    <property type="entry name" value="GATASE_TYPE_1"/>
    <property type="match status" value="1"/>
</dbReference>
<name>PYRG_SALEP</name>
<accession>B5QW41</accession>